<organism>
    <name type="scientific">Bombyx mori</name>
    <name type="common">Silk moth</name>
    <dbReference type="NCBI Taxonomy" id="7091"/>
    <lineage>
        <taxon>Eukaryota</taxon>
        <taxon>Metazoa</taxon>
        <taxon>Ecdysozoa</taxon>
        <taxon>Arthropoda</taxon>
        <taxon>Hexapoda</taxon>
        <taxon>Insecta</taxon>
        <taxon>Pterygota</taxon>
        <taxon>Neoptera</taxon>
        <taxon>Endopterygota</taxon>
        <taxon>Lepidoptera</taxon>
        <taxon>Glossata</taxon>
        <taxon>Ditrysia</taxon>
        <taxon>Bombycoidea</taxon>
        <taxon>Bombycidae</taxon>
        <taxon>Bombycinae</taxon>
        <taxon>Bombyx</taxon>
    </lineage>
</organism>
<proteinExistence type="evidence at protein level"/>
<comment type="function">
    <text evidence="4">Catalyzes juvenile hormone hydrolysis. Degrades juvenile hormone III (JH III) about 3 times and 5 times slower than juvenile hormone I (JH I) and II (JH II), respectively. Degrades cis-stilbene oxide and trans-stilbene oxide about 18 and 43 times slower than JH III, respectively.</text>
</comment>
<comment type="catalytic activity">
    <reaction evidence="4">
        <text>cis-stilbene oxide + H2O = (1R,2R)-hydrobenzoin</text>
        <dbReference type="Rhea" id="RHEA:23900"/>
        <dbReference type="ChEBI" id="CHEBI:15377"/>
        <dbReference type="ChEBI" id="CHEBI:50004"/>
        <dbReference type="ChEBI" id="CHEBI:50014"/>
        <dbReference type="EC" id="3.3.2.9"/>
    </reaction>
</comment>
<comment type="catalytic activity">
    <reaction evidence="4">
        <text>1-(4-methoxyphenyl)-N-methyl-N-[(3-methyloxetan-3-yl)methyl]methanamine + H2O = 2-{[(4-methoxybenzyl)(methyl)amino]methyl}-2-methylpropane-1,3-diol</text>
        <dbReference type="Rhea" id="RHEA:55764"/>
        <dbReference type="ChEBI" id="CHEBI:15377"/>
        <dbReference type="ChEBI" id="CHEBI:139161"/>
        <dbReference type="ChEBI" id="CHEBI:139164"/>
        <dbReference type="EC" id="3.3.2.9"/>
    </reaction>
</comment>
<comment type="biophysicochemical properties">
    <kinetics>
        <KM evidence="4">0.52 uM for juvenile hormone III</KM>
        <Vmax evidence="4">122.0 nmol/min/mg enzyme with juvenile hormone I as substrate</Vmax>
        <Vmax evidence="4">223.0 nmol/min/mg enzyme with juvenile hormone II as substrate</Vmax>
        <Vmax evidence="4">46.0 nmol/min/mg enzyme with juvenile hormone III as substrate</Vmax>
    </kinetics>
    <phDependence>
        <text evidence="4">Optimum pH is 7.5-8.0. Activity decreases rapidly below pH 7.0 and above pH 9.0.</text>
    </phDependence>
    <temperatureDependence>
        <text evidence="4">Activity increases as temperature increases from 0 to 37 degrees Celsius.</text>
    </temperatureDependence>
</comment>
<comment type="subunit">
    <text evidence="5">Homodimer.</text>
</comment>
<comment type="subcellular location">
    <subcellularLocation>
        <location evidence="4">Microsome membrane</location>
        <topology evidence="1">Single-pass membrane protein</topology>
    </subcellularLocation>
    <subcellularLocation>
        <location evidence="4">Endoplasmic reticulum membrane</location>
        <topology evidence="1">Single-pass membrane protein</topology>
    </subcellularLocation>
</comment>
<comment type="tissue specificity">
    <text evidence="4">Expressed in fat body, foregut and midgut but not in brain, subesophageal ganglia or silk gland of larvae on day 1 of fifth instar.</text>
</comment>
<comment type="developmental stage">
    <text evidence="4">Expressed in fourth and fifth instar larvae. Initial levels decline until day 2 of fourth instar but increase sharply on day 3. Levels do not significantly change on days 0 and 1 of fifth instar, increase on day 2 before falling again on days 3-4 to the level seen at day 2 of the fourth instar. Expression then remains low until the end of the instar.</text>
</comment>
<comment type="similarity">
    <text evidence="3">Belongs to the peptidase S33 family.</text>
</comment>
<sequence length="461" mass="52441">MSRLLFIALPLLVLASIPLYLLVLKSPPPMPKLDLEEWWGPPELKQKQDTSIKPFEITFSETMVKELKERIKKRRPFAPPLEGVGFKYGFNSKQLDSWLKYWAEEYPFAERQKFLNQYPHFKTNIQGLNIHFMRITPKVPKDVEIVPLLLLHGWPGSVREFYEAIPHLTAVSRDRNFALEIIAPSLPGYGFSDAAVRPGLAAAEVAVIFKNLMARLGYKQYYVQGGDWGALIGSAMATSFPKEIIGFHSYMALTLSPAATFLEFVGALFPSLIVEPELANRLYPLSEKYSTLLEELGYMHIQATKPDTVGIGLTDSPAGLLAYILEKFSTWTNPDLRSKEDGGLSYRWTKDQLIDNLMLYWSTKSIVTSMRLYAESFSSRHFDLKLDEIQVQVPTWVLQAKHELAYQPPCILKLKYTKLVNASVIEDGGHFLAFELPEIFAKDVLKAIGEFRKLKNVKTEL</sequence>
<protein>
    <recommendedName>
        <fullName evidence="6 8">Juvenile hormone epoxide hydrolase</fullName>
        <shortName evidence="6">bommo-JHEH</shortName>
        <ecNumber evidence="4">3.3.2.9</ecNumber>
    </recommendedName>
</protein>
<gene>
    <name evidence="9" type="primary">JHEH</name>
</gene>
<feature type="chain" id="PRO_0000389521" description="Juvenile hormone epoxide hydrolase">
    <location>
        <begin position="1"/>
        <end position="461"/>
    </location>
</feature>
<feature type="transmembrane region" description="Helical" evidence="3">
    <location>
        <begin position="4"/>
        <end position="24"/>
    </location>
</feature>
<feature type="active site" description="Nucleophile" evidence="1">
    <location>
        <position position="227"/>
    </location>
</feature>
<feature type="active site" description="Proton donor" evidence="2">
    <location>
        <position position="373"/>
    </location>
</feature>
<feature type="active site" description="Proton acceptor" evidence="1">
    <location>
        <position position="430"/>
    </location>
</feature>
<feature type="sequence conflict" description="In Ref. 2; BAF81491." evidence="7" ref="2">
    <original>FIA</original>
    <variation>LIV</variation>
    <location>
        <begin position="6"/>
        <end position="8"/>
    </location>
</feature>
<feature type="sequence conflict" description="In Ref. 2; BAF81491." evidence="7" ref="2">
    <original>R</original>
    <variation>K</variation>
    <location>
        <position position="173"/>
    </location>
</feature>
<feature type="sequence conflict" description="In Ref. 2; BAF81491." evidence="7" ref="2">
    <original>S</original>
    <variation>F</variation>
    <location>
        <position position="239"/>
    </location>
</feature>
<feature type="sequence conflict" description="In Ref. 2; BAF81491." evidence="7" ref="2">
    <original>Y</original>
    <variation>N</variation>
    <location>
        <position position="250"/>
    </location>
</feature>
<feature type="sequence conflict" description="In Ref. 2; BAF81491." evidence="7" ref="2">
    <original>T</original>
    <variation>P</variation>
    <location>
        <position position="417"/>
    </location>
</feature>
<feature type="helix" evidence="10">
    <location>
        <begin position="42"/>
        <end position="46"/>
    </location>
</feature>
<feature type="strand" evidence="10">
    <location>
        <begin position="53"/>
        <end position="55"/>
    </location>
</feature>
<feature type="helix" evidence="10">
    <location>
        <begin position="61"/>
        <end position="72"/>
    </location>
</feature>
<feature type="turn" evidence="10">
    <location>
        <begin position="85"/>
        <end position="88"/>
    </location>
</feature>
<feature type="helix" evidence="10">
    <location>
        <begin position="92"/>
        <end position="94"/>
    </location>
</feature>
<feature type="helix" evidence="10">
    <location>
        <begin position="95"/>
        <end position="104"/>
    </location>
</feature>
<feature type="helix" evidence="10">
    <location>
        <begin position="108"/>
        <end position="115"/>
    </location>
</feature>
<feature type="strand" evidence="10">
    <location>
        <begin position="120"/>
        <end position="125"/>
    </location>
</feature>
<feature type="strand" evidence="10">
    <location>
        <begin position="128"/>
        <end position="135"/>
    </location>
</feature>
<feature type="strand" evidence="10">
    <location>
        <begin position="144"/>
        <end position="151"/>
    </location>
</feature>
<feature type="helix" evidence="10">
    <location>
        <begin position="158"/>
        <end position="164"/>
    </location>
</feature>
<feature type="helix" evidence="10">
    <location>
        <begin position="165"/>
        <end position="168"/>
    </location>
</feature>
<feature type="strand" evidence="10">
    <location>
        <begin position="176"/>
        <end position="184"/>
    </location>
</feature>
<feature type="strand" evidence="10">
    <location>
        <begin position="196"/>
        <end position="198"/>
    </location>
</feature>
<feature type="helix" evidence="10">
    <location>
        <begin position="202"/>
        <end position="216"/>
    </location>
</feature>
<feature type="strand" evidence="10">
    <location>
        <begin position="219"/>
        <end position="226"/>
    </location>
</feature>
<feature type="helix" evidence="10">
    <location>
        <begin position="228"/>
        <end position="239"/>
    </location>
</feature>
<feature type="turn" evidence="10">
    <location>
        <begin position="241"/>
        <end position="243"/>
    </location>
</feature>
<feature type="strand" evidence="10">
    <location>
        <begin position="244"/>
        <end position="251"/>
    </location>
</feature>
<feature type="helix" evidence="10">
    <location>
        <begin position="257"/>
        <end position="268"/>
    </location>
</feature>
<feature type="helix" evidence="10">
    <location>
        <begin position="270"/>
        <end position="272"/>
    </location>
</feature>
<feature type="turn" evidence="10">
    <location>
        <begin position="276"/>
        <end position="278"/>
    </location>
</feature>
<feature type="helix" evidence="10">
    <location>
        <begin position="279"/>
        <end position="281"/>
    </location>
</feature>
<feature type="helix" evidence="10">
    <location>
        <begin position="285"/>
        <end position="295"/>
    </location>
</feature>
<feature type="helix" evidence="10">
    <location>
        <begin position="297"/>
        <end position="304"/>
    </location>
</feature>
<feature type="helix" evidence="10">
    <location>
        <begin position="306"/>
        <end position="315"/>
    </location>
</feature>
<feature type="helix" evidence="10">
    <location>
        <begin position="317"/>
        <end position="330"/>
    </location>
</feature>
<feature type="helix" evidence="10">
    <location>
        <begin position="334"/>
        <end position="338"/>
    </location>
</feature>
<feature type="strand" evidence="10">
    <location>
        <begin position="339"/>
        <end position="341"/>
    </location>
</feature>
<feature type="turn" evidence="10">
    <location>
        <begin position="342"/>
        <end position="345"/>
    </location>
</feature>
<feature type="helix" evidence="10">
    <location>
        <begin position="350"/>
        <end position="361"/>
    </location>
</feature>
<feature type="turn" evidence="10">
    <location>
        <begin position="362"/>
        <end position="364"/>
    </location>
</feature>
<feature type="helix" evidence="10">
    <location>
        <begin position="366"/>
        <end position="376"/>
    </location>
</feature>
<feature type="helix" evidence="10">
    <location>
        <begin position="379"/>
        <end position="382"/>
    </location>
</feature>
<feature type="turn" evidence="10">
    <location>
        <begin position="386"/>
        <end position="388"/>
    </location>
</feature>
<feature type="strand" evidence="10">
    <location>
        <begin position="395"/>
        <end position="399"/>
    </location>
</feature>
<feature type="helix" evidence="10">
    <location>
        <begin position="409"/>
        <end position="415"/>
    </location>
</feature>
<feature type="strand" evidence="10">
    <location>
        <begin position="419"/>
        <end position="424"/>
    </location>
</feature>
<feature type="helix" evidence="10">
    <location>
        <begin position="432"/>
        <end position="435"/>
    </location>
</feature>
<feature type="helix" evidence="10">
    <location>
        <begin position="437"/>
        <end position="454"/>
    </location>
</feature>
<dbReference type="EC" id="3.3.2.9" evidence="4"/>
<dbReference type="EMBL" id="AY377854">
    <property type="protein sequence ID" value="AAQ87024.1"/>
    <property type="molecule type" value="mRNA"/>
</dbReference>
<dbReference type="EMBL" id="AB362775">
    <property type="protein sequence ID" value="BAF81491.1"/>
    <property type="molecule type" value="mRNA"/>
</dbReference>
<dbReference type="RefSeq" id="NP_001037201.1">
    <property type="nucleotide sequence ID" value="NM_001043736.1"/>
</dbReference>
<dbReference type="PDB" id="4QLA">
    <property type="method" value="X-ray"/>
    <property type="resolution" value="2.30 A"/>
    <property type="chains" value="A/B=23-461"/>
</dbReference>
<dbReference type="PDBsum" id="4QLA"/>
<dbReference type="SMR" id="Q6U6J0"/>
<dbReference type="FunCoup" id="Q6U6J0">
    <property type="interactions" value="203"/>
</dbReference>
<dbReference type="STRING" id="7091.Q6U6J0"/>
<dbReference type="ESTHER" id="bommo-q6u6j0">
    <property type="family name" value="Epoxide_hydrolase"/>
</dbReference>
<dbReference type="MEROPS" id="S33.971"/>
<dbReference type="PaxDb" id="7091-BGIBMGA013930-TA"/>
<dbReference type="GeneID" id="692686"/>
<dbReference type="KEGG" id="bmor:692686"/>
<dbReference type="CTD" id="37181"/>
<dbReference type="eggNOG" id="KOG2565">
    <property type="taxonomic scope" value="Eukaryota"/>
</dbReference>
<dbReference type="HOGENOM" id="CLU_019414_3_0_1"/>
<dbReference type="InParanoid" id="Q6U6J0"/>
<dbReference type="EvolutionaryTrace" id="Q6U6J0"/>
<dbReference type="Proteomes" id="UP000005204">
    <property type="component" value="Unassembled WGS sequence"/>
</dbReference>
<dbReference type="GO" id="GO:0005789">
    <property type="term" value="C:endoplasmic reticulum membrane"/>
    <property type="evidence" value="ECO:0007669"/>
    <property type="project" value="UniProtKB-SubCell"/>
</dbReference>
<dbReference type="GO" id="GO:0033961">
    <property type="term" value="F:cis-stilbene-oxide hydrolase activity"/>
    <property type="evidence" value="ECO:0007669"/>
    <property type="project" value="UniProtKB-EC"/>
</dbReference>
<dbReference type="GO" id="GO:0009056">
    <property type="term" value="P:catabolic process"/>
    <property type="evidence" value="ECO:0007669"/>
    <property type="project" value="UniProtKB-KW"/>
</dbReference>
<dbReference type="GO" id="GO:0097176">
    <property type="term" value="P:epoxide metabolic process"/>
    <property type="evidence" value="ECO:0007669"/>
    <property type="project" value="TreeGrafter"/>
</dbReference>
<dbReference type="Gene3D" id="3.40.50.1820">
    <property type="entry name" value="alpha/beta hydrolase"/>
    <property type="match status" value="1"/>
</dbReference>
<dbReference type="InterPro" id="IPR029058">
    <property type="entry name" value="AB_hydrolase_fold"/>
</dbReference>
<dbReference type="InterPro" id="IPR000639">
    <property type="entry name" value="Epox_hydrolase-like"/>
</dbReference>
<dbReference type="InterPro" id="IPR010497">
    <property type="entry name" value="Epoxide_hydro_N"/>
</dbReference>
<dbReference type="InterPro" id="IPR016292">
    <property type="entry name" value="Epoxide_hydrolase"/>
</dbReference>
<dbReference type="PANTHER" id="PTHR21661:SF35">
    <property type="entry name" value="EPOXIDE HYDROLASE"/>
    <property type="match status" value="1"/>
</dbReference>
<dbReference type="PANTHER" id="PTHR21661">
    <property type="entry name" value="EPOXIDE HYDROLASE 1-RELATED"/>
    <property type="match status" value="1"/>
</dbReference>
<dbReference type="Pfam" id="PF06441">
    <property type="entry name" value="EHN"/>
    <property type="match status" value="1"/>
</dbReference>
<dbReference type="PIRSF" id="PIRSF001112">
    <property type="entry name" value="Epoxide_hydrolase"/>
    <property type="match status" value="1"/>
</dbReference>
<dbReference type="PRINTS" id="PR00412">
    <property type="entry name" value="EPOXHYDRLASE"/>
</dbReference>
<dbReference type="SUPFAM" id="SSF53474">
    <property type="entry name" value="alpha/beta-Hydrolases"/>
    <property type="match status" value="1"/>
</dbReference>
<reference evidence="7 8" key="1">
    <citation type="journal article" date="2005" name="Insect Biochem. Mol. Biol.">
        <title>Molecular and biochemical characterization of juvenile hormone epoxide hydrolase from the silkworm, Bombyx mori.</title>
        <authorList>
            <person name="Zhang Q.R."/>
            <person name="Xu W.H."/>
            <person name="Chen F.S."/>
            <person name="Li S."/>
        </authorList>
    </citation>
    <scope>NUCLEOTIDE SEQUENCE [MRNA]</scope>
    <scope>FUNCTION</scope>
    <scope>CATALYTIC ACTIVITY</scope>
    <scope>BIOPHYSICOCHEMICAL PROPERTIES</scope>
    <scope>SUBCELLULAR LOCATION</scope>
    <scope>TISSUE SPECIFICITY</scope>
    <scope>DEVELOPMENTAL STAGE</scope>
    <source>
        <strain evidence="4">Jingsong X Haoyue</strain>
        <tissue evidence="4">Larval fat body</tissue>
    </source>
</reference>
<reference evidence="9" key="2">
    <citation type="submission" date="2007-10" db="EMBL/GenBank/DDBJ databases">
        <title>Characterization of juvenile hormone epoxide hydrolase and its related genes in larval development of silkworm, Bombyx mori.</title>
        <authorList>
            <person name="Seino A."/>
            <person name="Ogura T."/>
            <person name="Tsubota T."/>
            <person name="Shimomura M."/>
            <person name="Tan A."/>
            <person name="Mita K."/>
            <person name="Shinoda T."/>
            <person name="Nakagawa Y."/>
            <person name="Shiotsuki T."/>
        </authorList>
    </citation>
    <scope>NUCLEOTIDE SEQUENCE [MRNA]</scope>
</reference>
<reference key="3">
    <citation type="journal article" date="2014" name="Proteins">
        <title>Crystal structure of juvenile hormone epoxide hydrolase from the silkworm Bombyx mori.</title>
        <authorList>
            <person name="Zhou K."/>
            <person name="Jia N."/>
            <person name="Hu C."/>
            <person name="Jiang Y.L."/>
            <person name="Yang J.P."/>
            <person name="Chen Y."/>
            <person name="Li S."/>
            <person name="Li W.F."/>
            <person name="Zhou C.Z."/>
        </authorList>
    </citation>
    <scope>X-RAY CRYSTALLOGRAPHY (2.30 ANGSTROMS) OF 23-461</scope>
    <scope>SUBUNIT</scope>
</reference>
<evidence type="ECO:0000250" key="1">
    <source>
        <dbReference type="UniProtKB" id="P07687"/>
    </source>
</evidence>
<evidence type="ECO:0000250" key="2">
    <source>
        <dbReference type="UniProtKB" id="P34913"/>
    </source>
</evidence>
<evidence type="ECO:0000255" key="3"/>
<evidence type="ECO:0000269" key="4">
    <source>
    </source>
</evidence>
<evidence type="ECO:0000269" key="5">
    <source>
    </source>
</evidence>
<evidence type="ECO:0000303" key="6">
    <source>
    </source>
</evidence>
<evidence type="ECO:0000305" key="7"/>
<evidence type="ECO:0000312" key="8">
    <source>
        <dbReference type="EMBL" id="AAQ87024.1"/>
    </source>
</evidence>
<evidence type="ECO:0000312" key="9">
    <source>
        <dbReference type="EMBL" id="BAF81491.1"/>
    </source>
</evidence>
<evidence type="ECO:0007829" key="10">
    <source>
        <dbReference type="PDB" id="4QLA"/>
    </source>
</evidence>
<accession>Q6U6J0</accession>
<accession>A8CGI8</accession>
<name>HYEP_BOMMO</name>
<keyword id="KW-0002">3D-structure</keyword>
<keyword id="KW-0058">Aromatic hydrocarbons catabolism</keyword>
<keyword id="KW-0256">Endoplasmic reticulum</keyword>
<keyword id="KW-0378">Hydrolase</keyword>
<keyword id="KW-0472">Membrane</keyword>
<keyword id="KW-0492">Microsome</keyword>
<keyword id="KW-1185">Reference proteome</keyword>
<keyword id="KW-0812">Transmembrane</keyword>
<keyword id="KW-1133">Transmembrane helix</keyword>